<comment type="function">
    <text evidence="1">Small GTP-binding protein which cycles between an inactive GDP-bound and an active GTP-bound form, and the rate of cycling is regulated by guanine nucleotide exchange factors (GEF) and GTPase-activating proteins (GAP). GTP-binding protein that does not act as an allosteric activator of the cholera toxin catalytic subunit. Recruits CYTH1, CYTH2, CYTH3 and CYTH4 to the plasma membrane in GDP-bound form (By similarity).</text>
</comment>
<comment type="subunit">
    <text evidence="1">Interacts with CYTH2. Interacts with KPNA2; the interaction is direct. Does not interact with ARL4A (By similarity).</text>
</comment>
<comment type="subcellular location">
    <subcellularLocation>
        <location evidence="1">Cell membrane</location>
    </subcellularLocation>
    <subcellularLocation>
        <location evidence="1">Cytoplasm</location>
    </subcellularLocation>
    <subcellularLocation>
        <location evidence="1">Nucleus</location>
        <location evidence="1">Nucleolus</location>
    </subcellularLocation>
    <text evidence="1">Localization in the nucleolus is dependent by nucleotide binding.</text>
</comment>
<comment type="tissue specificity">
    <text evidence="3">Expressed strongly in testis and liver. Expressed slightly in heart, spleen, lung and kidney.</text>
</comment>
<comment type="developmental stage">
    <text evidence="3">Expressed strongly in embryo at 7 dpc. Expressed slightly in embryo at 11, 15 and 17 dpc.</text>
</comment>
<comment type="PTM">
    <text evidence="1">Myristoylated.</text>
</comment>
<comment type="similarity">
    <text evidence="4">Belongs to the small GTPase superfamily. Arf family.</text>
</comment>
<sequence>MGNGLSDQTSILSSLPSFQSFHIVILGLDCAGKTTVLYRLQFNEFVNTVPTKGFNTEKIKVTLGNSKTVTFHFWDVGGQEKLRPLWKSYTRCTDGIVFVVDSVDVERMEEAKTELHKITRISENQGVPVLIVANKQDLRNSLSLSEIEKLLAMGELSSSTPWHLQPTCAIIGDGLKEGLEKLHDMIIKRRKMLRQQKKKR</sequence>
<gene>
    <name type="primary">Arl4a</name>
    <name type="synonym">Arl4</name>
</gene>
<keyword id="KW-1003">Cell membrane</keyword>
<keyword id="KW-0963">Cytoplasm</keyword>
<keyword id="KW-0342">GTP-binding</keyword>
<keyword id="KW-0449">Lipoprotein</keyword>
<keyword id="KW-0472">Membrane</keyword>
<keyword id="KW-0519">Myristate</keyword>
<keyword id="KW-0547">Nucleotide-binding</keyword>
<keyword id="KW-0539">Nucleus</keyword>
<keyword id="KW-1185">Reference proteome</keyword>
<protein>
    <recommendedName>
        <fullName>ADP-ribosylation factor-like protein 4A</fullName>
    </recommendedName>
</protein>
<name>ARL4A_MOUSE</name>
<proteinExistence type="evidence at transcript level"/>
<evidence type="ECO:0000250" key="1"/>
<evidence type="ECO:0000255" key="2"/>
<evidence type="ECO:0000269" key="3">
    <source>
    </source>
</evidence>
<evidence type="ECO:0000305" key="4"/>
<reference key="1">
    <citation type="submission" date="1996-11" db="EMBL/GenBank/DDBJ databases">
        <title>Cloning and characterization of a mouse ADP-ribosylation factor (ARF)-like 4 gene.</title>
        <authorList>
            <person name="Lee F.-J.S."/>
        </authorList>
    </citation>
    <scope>NUCLEOTIDE SEQUENCE [MRNA]</scope>
</reference>
<reference key="2">
    <citation type="journal article" date="1998" name="Biochem. J.">
        <title>The mouse ADP-ribosylation factor-like 4 gene: two separate promoters direct specific transcription in tissues and testicular germ cell.</title>
        <authorList>
            <person name="Jacobs S."/>
            <person name="Schuermann A."/>
            <person name="Becker W."/>
            <person name="Boeckers T.M."/>
            <person name="Copeland N.G."/>
            <person name="Jenkins N.A."/>
            <person name="Joost H.-G."/>
        </authorList>
    </citation>
    <scope>NUCLEOTIDE SEQUENCE [MRNA]</scope>
    <source>
        <strain>129/SvJ</strain>
    </source>
</reference>
<reference key="3">
    <citation type="journal article" date="2005" name="Science">
        <title>The transcriptional landscape of the mammalian genome.</title>
        <authorList>
            <person name="Carninci P."/>
            <person name="Kasukawa T."/>
            <person name="Katayama S."/>
            <person name="Gough J."/>
            <person name="Frith M.C."/>
            <person name="Maeda N."/>
            <person name="Oyama R."/>
            <person name="Ravasi T."/>
            <person name="Lenhard B."/>
            <person name="Wells C."/>
            <person name="Kodzius R."/>
            <person name="Shimokawa K."/>
            <person name="Bajic V.B."/>
            <person name="Brenner S.E."/>
            <person name="Batalov S."/>
            <person name="Forrest A.R."/>
            <person name="Zavolan M."/>
            <person name="Davis M.J."/>
            <person name="Wilming L.G."/>
            <person name="Aidinis V."/>
            <person name="Allen J.E."/>
            <person name="Ambesi-Impiombato A."/>
            <person name="Apweiler R."/>
            <person name="Aturaliya R.N."/>
            <person name="Bailey T.L."/>
            <person name="Bansal M."/>
            <person name="Baxter L."/>
            <person name="Beisel K.W."/>
            <person name="Bersano T."/>
            <person name="Bono H."/>
            <person name="Chalk A.M."/>
            <person name="Chiu K.P."/>
            <person name="Choudhary V."/>
            <person name="Christoffels A."/>
            <person name="Clutterbuck D.R."/>
            <person name="Crowe M.L."/>
            <person name="Dalla E."/>
            <person name="Dalrymple B.P."/>
            <person name="de Bono B."/>
            <person name="Della Gatta G."/>
            <person name="di Bernardo D."/>
            <person name="Down T."/>
            <person name="Engstrom P."/>
            <person name="Fagiolini M."/>
            <person name="Faulkner G."/>
            <person name="Fletcher C.F."/>
            <person name="Fukushima T."/>
            <person name="Furuno M."/>
            <person name="Futaki S."/>
            <person name="Gariboldi M."/>
            <person name="Georgii-Hemming P."/>
            <person name="Gingeras T.R."/>
            <person name="Gojobori T."/>
            <person name="Green R.E."/>
            <person name="Gustincich S."/>
            <person name="Harbers M."/>
            <person name="Hayashi Y."/>
            <person name="Hensch T.K."/>
            <person name="Hirokawa N."/>
            <person name="Hill D."/>
            <person name="Huminiecki L."/>
            <person name="Iacono M."/>
            <person name="Ikeo K."/>
            <person name="Iwama A."/>
            <person name="Ishikawa T."/>
            <person name="Jakt M."/>
            <person name="Kanapin A."/>
            <person name="Katoh M."/>
            <person name="Kawasawa Y."/>
            <person name="Kelso J."/>
            <person name="Kitamura H."/>
            <person name="Kitano H."/>
            <person name="Kollias G."/>
            <person name="Krishnan S.P."/>
            <person name="Kruger A."/>
            <person name="Kummerfeld S.K."/>
            <person name="Kurochkin I.V."/>
            <person name="Lareau L.F."/>
            <person name="Lazarevic D."/>
            <person name="Lipovich L."/>
            <person name="Liu J."/>
            <person name="Liuni S."/>
            <person name="McWilliam S."/>
            <person name="Madan Babu M."/>
            <person name="Madera M."/>
            <person name="Marchionni L."/>
            <person name="Matsuda H."/>
            <person name="Matsuzawa S."/>
            <person name="Miki H."/>
            <person name="Mignone F."/>
            <person name="Miyake S."/>
            <person name="Morris K."/>
            <person name="Mottagui-Tabar S."/>
            <person name="Mulder N."/>
            <person name="Nakano N."/>
            <person name="Nakauchi H."/>
            <person name="Ng P."/>
            <person name="Nilsson R."/>
            <person name="Nishiguchi S."/>
            <person name="Nishikawa S."/>
            <person name="Nori F."/>
            <person name="Ohara O."/>
            <person name="Okazaki Y."/>
            <person name="Orlando V."/>
            <person name="Pang K.C."/>
            <person name="Pavan W.J."/>
            <person name="Pavesi G."/>
            <person name="Pesole G."/>
            <person name="Petrovsky N."/>
            <person name="Piazza S."/>
            <person name="Reed J."/>
            <person name="Reid J.F."/>
            <person name="Ring B.Z."/>
            <person name="Ringwald M."/>
            <person name="Rost B."/>
            <person name="Ruan Y."/>
            <person name="Salzberg S.L."/>
            <person name="Sandelin A."/>
            <person name="Schneider C."/>
            <person name="Schoenbach C."/>
            <person name="Sekiguchi K."/>
            <person name="Semple C.A."/>
            <person name="Seno S."/>
            <person name="Sessa L."/>
            <person name="Sheng Y."/>
            <person name="Shibata Y."/>
            <person name="Shimada H."/>
            <person name="Shimada K."/>
            <person name="Silva D."/>
            <person name="Sinclair B."/>
            <person name="Sperling S."/>
            <person name="Stupka E."/>
            <person name="Sugiura K."/>
            <person name="Sultana R."/>
            <person name="Takenaka Y."/>
            <person name="Taki K."/>
            <person name="Tammoja K."/>
            <person name="Tan S.L."/>
            <person name="Tang S."/>
            <person name="Taylor M.S."/>
            <person name="Tegner J."/>
            <person name="Teichmann S.A."/>
            <person name="Ueda H.R."/>
            <person name="van Nimwegen E."/>
            <person name="Verardo R."/>
            <person name="Wei C.L."/>
            <person name="Yagi K."/>
            <person name="Yamanishi H."/>
            <person name="Zabarovsky E."/>
            <person name="Zhu S."/>
            <person name="Zimmer A."/>
            <person name="Hide W."/>
            <person name="Bult C."/>
            <person name="Grimmond S.M."/>
            <person name="Teasdale R.D."/>
            <person name="Liu E.T."/>
            <person name="Brusic V."/>
            <person name="Quackenbush J."/>
            <person name="Wahlestedt C."/>
            <person name="Mattick J.S."/>
            <person name="Hume D.A."/>
            <person name="Kai C."/>
            <person name="Sasaki D."/>
            <person name="Tomaru Y."/>
            <person name="Fukuda S."/>
            <person name="Kanamori-Katayama M."/>
            <person name="Suzuki M."/>
            <person name="Aoki J."/>
            <person name="Arakawa T."/>
            <person name="Iida J."/>
            <person name="Imamura K."/>
            <person name="Itoh M."/>
            <person name="Kato T."/>
            <person name="Kawaji H."/>
            <person name="Kawagashira N."/>
            <person name="Kawashima T."/>
            <person name="Kojima M."/>
            <person name="Kondo S."/>
            <person name="Konno H."/>
            <person name="Nakano K."/>
            <person name="Ninomiya N."/>
            <person name="Nishio T."/>
            <person name="Okada M."/>
            <person name="Plessy C."/>
            <person name="Shibata K."/>
            <person name="Shiraki T."/>
            <person name="Suzuki S."/>
            <person name="Tagami M."/>
            <person name="Waki K."/>
            <person name="Watahiki A."/>
            <person name="Okamura-Oho Y."/>
            <person name="Suzuki H."/>
            <person name="Kawai J."/>
            <person name="Hayashizaki Y."/>
        </authorList>
    </citation>
    <scope>NUCLEOTIDE SEQUENCE [LARGE SCALE MRNA]</scope>
    <source>
        <strain>C57BL/6J</strain>
        <tissue>Amnion</tissue>
        <tissue>Head</tissue>
        <tissue>Testis</tissue>
    </source>
</reference>
<reference key="4">
    <citation type="journal article" date="2004" name="Genome Res.">
        <title>The status, quality, and expansion of the NIH full-length cDNA project: the Mammalian Gene Collection (MGC).</title>
        <authorList>
            <consortium name="The MGC Project Team"/>
        </authorList>
    </citation>
    <scope>NUCLEOTIDE SEQUENCE [LARGE SCALE MRNA]</scope>
    <source>
        <strain>FVB/N</strain>
        <tissue>Mammary tumor</tissue>
    </source>
</reference>
<reference key="5">
    <citation type="journal article" date="2000" name="J. Biol. Chem.">
        <title>ARL4, an ARF-like protein that is developmentally regulated and localized to nuclei and nucleoli.</title>
        <authorList>
            <person name="Lin C.Y."/>
            <person name="Huang P.H."/>
            <person name="Liao W.L."/>
            <person name="Cheng H.J."/>
            <person name="Huang C.F."/>
            <person name="Kuo J.C."/>
            <person name="Patton W.A."/>
            <person name="Massenburg D."/>
            <person name="Moss J."/>
            <person name="Lee F.J."/>
        </authorList>
    </citation>
    <scope>SUBCELLULAR LOCATION</scope>
    <scope>TISSUE SPECIFICITY</scope>
    <scope>DEVELOPMENTAL STAGE</scope>
</reference>
<dbReference type="EMBL" id="U76546">
    <property type="protein sequence ID" value="AAB18812.1"/>
    <property type="molecule type" value="mRNA"/>
</dbReference>
<dbReference type="EMBL" id="AK006286">
    <property type="protein sequence ID" value="BAB24505.1"/>
    <property type="molecule type" value="mRNA"/>
</dbReference>
<dbReference type="EMBL" id="AK048606">
    <property type="protein sequence ID" value="BAC33388.1"/>
    <property type="molecule type" value="mRNA"/>
</dbReference>
<dbReference type="EMBL" id="AK168618">
    <property type="protein sequence ID" value="BAE40483.1"/>
    <property type="molecule type" value="mRNA"/>
</dbReference>
<dbReference type="EMBL" id="BC029234">
    <property type="protein sequence ID" value="AAH29234.1"/>
    <property type="molecule type" value="mRNA"/>
</dbReference>
<dbReference type="CCDS" id="CCDS25890.1"/>
<dbReference type="RefSeq" id="NP_001034604.1">
    <property type="nucleotide sequence ID" value="NM_001039515.1"/>
</dbReference>
<dbReference type="RefSeq" id="NP_031513.1">
    <property type="nucleotide sequence ID" value="NM_007487.3"/>
</dbReference>
<dbReference type="SMR" id="P61213"/>
<dbReference type="BioGRID" id="198204">
    <property type="interactions" value="1"/>
</dbReference>
<dbReference type="FunCoup" id="P61213">
    <property type="interactions" value="2077"/>
</dbReference>
<dbReference type="STRING" id="10090.ENSMUSP00000114458"/>
<dbReference type="PhosphoSitePlus" id="P61213"/>
<dbReference type="PaxDb" id="10090-ENSMUSP00000114458"/>
<dbReference type="ProteomicsDB" id="265102"/>
<dbReference type="Antibodypedia" id="25147">
    <property type="antibodies" value="201 antibodies from 31 providers"/>
</dbReference>
<dbReference type="DNASU" id="11861"/>
<dbReference type="Ensembl" id="ENSMUST00000101472.4">
    <property type="protein sequence ID" value="ENSMUSP00000099013.4"/>
    <property type="gene ID" value="ENSMUSG00000047446.19"/>
</dbReference>
<dbReference type="Ensembl" id="ENSMUST00000146905.2">
    <property type="protein sequence ID" value="ENSMUSP00000114458.2"/>
    <property type="gene ID" value="ENSMUSG00000047446.19"/>
</dbReference>
<dbReference type="GeneID" id="11861"/>
<dbReference type="KEGG" id="mmu:11861"/>
<dbReference type="UCSC" id="uc007nks.1">
    <property type="organism name" value="mouse"/>
</dbReference>
<dbReference type="AGR" id="MGI:99437"/>
<dbReference type="CTD" id="10124"/>
<dbReference type="MGI" id="MGI:99437">
    <property type="gene designation" value="Arl4a"/>
</dbReference>
<dbReference type="VEuPathDB" id="HostDB:ENSMUSG00000047446"/>
<dbReference type="eggNOG" id="KOG0070">
    <property type="taxonomic scope" value="Eukaryota"/>
</dbReference>
<dbReference type="GeneTree" id="ENSGT00940000154546"/>
<dbReference type="HOGENOM" id="CLU_040729_9_3_1"/>
<dbReference type="InParanoid" id="P61213"/>
<dbReference type="OMA" id="ETKQNWH"/>
<dbReference type="OrthoDB" id="2011769at2759"/>
<dbReference type="PhylomeDB" id="P61213"/>
<dbReference type="TreeFam" id="TF105464"/>
<dbReference type="BioGRID-ORCS" id="11861">
    <property type="hits" value="0 hits in 79 CRISPR screens"/>
</dbReference>
<dbReference type="PRO" id="PR:P61213"/>
<dbReference type="Proteomes" id="UP000000589">
    <property type="component" value="Chromosome 12"/>
</dbReference>
<dbReference type="RNAct" id="P61213">
    <property type="molecule type" value="protein"/>
</dbReference>
<dbReference type="Bgee" id="ENSMUSG00000047446">
    <property type="expression patterns" value="Expressed in seminiferous tubule of testis and 269 other cell types or tissues"/>
</dbReference>
<dbReference type="ExpressionAtlas" id="P61213">
    <property type="expression patterns" value="baseline and differential"/>
</dbReference>
<dbReference type="GO" id="GO:0005829">
    <property type="term" value="C:cytosol"/>
    <property type="evidence" value="ECO:0007669"/>
    <property type="project" value="Ensembl"/>
</dbReference>
<dbReference type="GO" id="GO:0005730">
    <property type="term" value="C:nucleolus"/>
    <property type="evidence" value="ECO:0000250"/>
    <property type="project" value="UniProtKB"/>
</dbReference>
<dbReference type="GO" id="GO:0005654">
    <property type="term" value="C:nucleoplasm"/>
    <property type="evidence" value="ECO:0007669"/>
    <property type="project" value="Ensembl"/>
</dbReference>
<dbReference type="GO" id="GO:0005634">
    <property type="term" value="C:nucleus"/>
    <property type="evidence" value="ECO:0000314"/>
    <property type="project" value="UniProtKB"/>
</dbReference>
<dbReference type="GO" id="GO:0005886">
    <property type="term" value="C:plasma membrane"/>
    <property type="evidence" value="ECO:0000250"/>
    <property type="project" value="UniProtKB"/>
</dbReference>
<dbReference type="GO" id="GO:0005525">
    <property type="term" value="F:GTP binding"/>
    <property type="evidence" value="ECO:0000250"/>
    <property type="project" value="UniProtKB"/>
</dbReference>
<dbReference type="GO" id="GO:0003924">
    <property type="term" value="F:GTPase activity"/>
    <property type="evidence" value="ECO:0000304"/>
    <property type="project" value="MGI"/>
</dbReference>
<dbReference type="GO" id="GO:0050873">
    <property type="term" value="P:brown fat cell differentiation"/>
    <property type="evidence" value="ECO:0000314"/>
    <property type="project" value="MGI"/>
</dbReference>
<dbReference type="CDD" id="cd04152">
    <property type="entry name" value="Arl4_Arl7"/>
    <property type="match status" value="1"/>
</dbReference>
<dbReference type="FunFam" id="3.40.50.300:FF:000658">
    <property type="entry name" value="ADP-ribosylation factor-like protein 4A"/>
    <property type="match status" value="1"/>
</dbReference>
<dbReference type="Gene3D" id="3.40.50.300">
    <property type="entry name" value="P-loop containing nucleotide triphosphate hydrolases"/>
    <property type="match status" value="1"/>
</dbReference>
<dbReference type="InterPro" id="IPR027417">
    <property type="entry name" value="P-loop_NTPase"/>
</dbReference>
<dbReference type="InterPro" id="IPR005225">
    <property type="entry name" value="Small_GTP-bd"/>
</dbReference>
<dbReference type="InterPro" id="IPR024156">
    <property type="entry name" value="Small_GTPase_ARF"/>
</dbReference>
<dbReference type="InterPro" id="IPR006689">
    <property type="entry name" value="Small_GTPase_ARF/SAR"/>
</dbReference>
<dbReference type="NCBIfam" id="TIGR00231">
    <property type="entry name" value="small_GTP"/>
    <property type="match status" value="1"/>
</dbReference>
<dbReference type="PANTHER" id="PTHR11711">
    <property type="entry name" value="ADP RIBOSYLATION FACTOR-RELATED"/>
    <property type="match status" value="1"/>
</dbReference>
<dbReference type="Pfam" id="PF00025">
    <property type="entry name" value="Arf"/>
    <property type="match status" value="1"/>
</dbReference>
<dbReference type="PRINTS" id="PR00449">
    <property type="entry name" value="RASTRNSFRMNG"/>
</dbReference>
<dbReference type="SMART" id="SM00177">
    <property type="entry name" value="ARF"/>
    <property type="match status" value="1"/>
</dbReference>
<dbReference type="SMART" id="SM00175">
    <property type="entry name" value="RAB"/>
    <property type="match status" value="1"/>
</dbReference>
<dbReference type="SMART" id="SM00173">
    <property type="entry name" value="RAS"/>
    <property type="match status" value="1"/>
</dbReference>
<dbReference type="SMART" id="SM00178">
    <property type="entry name" value="SAR"/>
    <property type="match status" value="1"/>
</dbReference>
<dbReference type="SUPFAM" id="SSF52540">
    <property type="entry name" value="P-loop containing nucleoside triphosphate hydrolases"/>
    <property type="match status" value="1"/>
</dbReference>
<dbReference type="PROSITE" id="PS51417">
    <property type="entry name" value="ARF"/>
    <property type="match status" value="1"/>
</dbReference>
<feature type="initiator methionine" description="Removed" evidence="2">
    <location>
        <position position="1"/>
    </location>
</feature>
<feature type="chain" id="PRO_0000207460" description="ADP-ribosylation factor-like protein 4A">
    <location>
        <begin position="2"/>
        <end position="200"/>
    </location>
</feature>
<feature type="binding site" evidence="1">
    <location>
        <begin position="27"/>
        <end position="34"/>
    </location>
    <ligand>
        <name>GTP</name>
        <dbReference type="ChEBI" id="CHEBI:37565"/>
    </ligand>
</feature>
<feature type="binding site" evidence="1">
    <location>
        <begin position="75"/>
        <end position="79"/>
    </location>
    <ligand>
        <name>GTP</name>
        <dbReference type="ChEBI" id="CHEBI:37565"/>
    </ligand>
</feature>
<feature type="binding site" evidence="1">
    <location>
        <begin position="134"/>
        <end position="137"/>
    </location>
    <ligand>
        <name>GTP</name>
        <dbReference type="ChEBI" id="CHEBI:37565"/>
    </ligand>
</feature>
<feature type="lipid moiety-binding region" description="N-myristoyl glycine" evidence="2">
    <location>
        <position position="2"/>
    </location>
</feature>
<accession>P61213</accession>
<accession>P41275</accession>
<accession>Q3TGR5</accession>
<organism>
    <name type="scientific">Mus musculus</name>
    <name type="common">Mouse</name>
    <dbReference type="NCBI Taxonomy" id="10090"/>
    <lineage>
        <taxon>Eukaryota</taxon>
        <taxon>Metazoa</taxon>
        <taxon>Chordata</taxon>
        <taxon>Craniata</taxon>
        <taxon>Vertebrata</taxon>
        <taxon>Euteleostomi</taxon>
        <taxon>Mammalia</taxon>
        <taxon>Eutheria</taxon>
        <taxon>Euarchontoglires</taxon>
        <taxon>Glires</taxon>
        <taxon>Rodentia</taxon>
        <taxon>Myomorpha</taxon>
        <taxon>Muroidea</taxon>
        <taxon>Muridae</taxon>
        <taxon>Murinae</taxon>
        <taxon>Mus</taxon>
        <taxon>Mus</taxon>
    </lineage>
</organism>